<gene>
    <name evidence="1" type="primary">truB</name>
    <name type="ordered locus">XAC2685</name>
</gene>
<keyword id="KW-0413">Isomerase</keyword>
<keyword id="KW-0819">tRNA processing</keyword>
<comment type="function">
    <text evidence="1">Responsible for synthesis of pseudouridine from uracil-55 in the psi GC loop of transfer RNAs.</text>
</comment>
<comment type="catalytic activity">
    <reaction evidence="1">
        <text>uridine(55) in tRNA = pseudouridine(55) in tRNA</text>
        <dbReference type="Rhea" id="RHEA:42532"/>
        <dbReference type="Rhea" id="RHEA-COMP:10101"/>
        <dbReference type="Rhea" id="RHEA-COMP:10102"/>
        <dbReference type="ChEBI" id="CHEBI:65314"/>
        <dbReference type="ChEBI" id="CHEBI:65315"/>
        <dbReference type="EC" id="5.4.99.25"/>
    </reaction>
</comment>
<comment type="similarity">
    <text evidence="1">Belongs to the pseudouridine synthase TruB family. Type 1 subfamily.</text>
</comment>
<protein>
    <recommendedName>
        <fullName evidence="1">tRNA pseudouridine synthase B</fullName>
        <ecNumber evidence="1">5.4.99.25</ecNumber>
    </recommendedName>
    <alternativeName>
        <fullName evidence="1">tRNA pseudouridine(55) synthase</fullName>
        <shortName evidence="1">Psi55 synthase</shortName>
    </alternativeName>
    <alternativeName>
        <fullName evidence="1">tRNA pseudouridylate synthase</fullName>
    </alternativeName>
    <alternativeName>
        <fullName evidence="1">tRNA-uridine isomerase</fullName>
    </alternativeName>
</protein>
<sequence length="308" mass="32789">MKPRIVYRPLHGILLLDKPSGLSSNNALQAARRLLRAEKGGHTGSLDPLATGLLPLCFGEATKIAGLLLGSAKAYDAEIVLGVTTDTDDADGESLRERAVPDLSEADLQAALAPFIGRIQQQAPIYSALKQGGEPLYAKARRGERIEAPVREVDVQAIEVLGYGAPRLRLRVTCGSGTYIRSLARDLGEALGCGAHIASLRRLWVEPFRAPQMITLEALSAVLEAGAEAQTLLLPIEAGLADFARIVLDQTRAARFRMGQRLRDAAFPTGQVAVFGPDGTPSGLGLVDADGRLSPQRLFNGLNEIPAC</sequence>
<proteinExistence type="inferred from homology"/>
<name>TRUB_XANAC</name>
<organism>
    <name type="scientific">Xanthomonas axonopodis pv. citri (strain 306)</name>
    <dbReference type="NCBI Taxonomy" id="190486"/>
    <lineage>
        <taxon>Bacteria</taxon>
        <taxon>Pseudomonadati</taxon>
        <taxon>Pseudomonadota</taxon>
        <taxon>Gammaproteobacteria</taxon>
        <taxon>Lysobacterales</taxon>
        <taxon>Lysobacteraceae</taxon>
        <taxon>Xanthomonas</taxon>
    </lineage>
</organism>
<reference key="1">
    <citation type="journal article" date="2002" name="Nature">
        <title>Comparison of the genomes of two Xanthomonas pathogens with differing host specificities.</title>
        <authorList>
            <person name="da Silva A.C.R."/>
            <person name="Ferro J.A."/>
            <person name="Reinach F.C."/>
            <person name="Farah C.S."/>
            <person name="Furlan L.R."/>
            <person name="Quaggio R.B."/>
            <person name="Monteiro-Vitorello C.B."/>
            <person name="Van Sluys M.A."/>
            <person name="Almeida N.F. Jr."/>
            <person name="Alves L.M.C."/>
            <person name="do Amaral A.M."/>
            <person name="Bertolini M.C."/>
            <person name="Camargo L.E.A."/>
            <person name="Camarotte G."/>
            <person name="Cannavan F."/>
            <person name="Cardozo J."/>
            <person name="Chambergo F."/>
            <person name="Ciapina L.P."/>
            <person name="Cicarelli R.M.B."/>
            <person name="Coutinho L.L."/>
            <person name="Cursino-Santos J.R."/>
            <person name="El-Dorry H."/>
            <person name="Faria J.B."/>
            <person name="Ferreira A.J.S."/>
            <person name="Ferreira R.C.C."/>
            <person name="Ferro M.I.T."/>
            <person name="Formighieri E.F."/>
            <person name="Franco M.C."/>
            <person name="Greggio C.C."/>
            <person name="Gruber A."/>
            <person name="Katsuyama A.M."/>
            <person name="Kishi L.T."/>
            <person name="Leite R.P."/>
            <person name="Lemos E.G.M."/>
            <person name="Lemos M.V.F."/>
            <person name="Locali E.C."/>
            <person name="Machado M.A."/>
            <person name="Madeira A.M.B.N."/>
            <person name="Martinez-Rossi N.M."/>
            <person name="Martins E.C."/>
            <person name="Meidanis J."/>
            <person name="Menck C.F.M."/>
            <person name="Miyaki C.Y."/>
            <person name="Moon D.H."/>
            <person name="Moreira L.M."/>
            <person name="Novo M.T.M."/>
            <person name="Okura V.K."/>
            <person name="Oliveira M.C."/>
            <person name="Oliveira V.R."/>
            <person name="Pereira H.A."/>
            <person name="Rossi A."/>
            <person name="Sena J.A.D."/>
            <person name="Silva C."/>
            <person name="de Souza R.F."/>
            <person name="Spinola L.A.F."/>
            <person name="Takita M.A."/>
            <person name="Tamura R.E."/>
            <person name="Teixeira E.C."/>
            <person name="Tezza R.I.D."/>
            <person name="Trindade dos Santos M."/>
            <person name="Truffi D."/>
            <person name="Tsai S.M."/>
            <person name="White F.F."/>
            <person name="Setubal J.C."/>
            <person name="Kitajima J.P."/>
        </authorList>
    </citation>
    <scope>NUCLEOTIDE SEQUENCE [LARGE SCALE GENOMIC DNA]</scope>
    <source>
        <strain>306</strain>
    </source>
</reference>
<feature type="chain" id="PRO_0000121945" description="tRNA pseudouridine synthase B">
    <location>
        <begin position="1"/>
        <end position="308"/>
    </location>
</feature>
<feature type="active site" description="Nucleophile" evidence="1">
    <location>
        <position position="47"/>
    </location>
</feature>
<accession>Q8PJ57</accession>
<evidence type="ECO:0000255" key="1">
    <source>
        <dbReference type="HAMAP-Rule" id="MF_01080"/>
    </source>
</evidence>
<dbReference type="EC" id="5.4.99.25" evidence="1"/>
<dbReference type="EMBL" id="AE008923">
    <property type="protein sequence ID" value="AAM37532.1"/>
    <property type="molecule type" value="Genomic_DNA"/>
</dbReference>
<dbReference type="RefSeq" id="WP_003485581.1">
    <property type="nucleotide sequence ID" value="NC_003919.1"/>
</dbReference>
<dbReference type="SMR" id="Q8PJ57"/>
<dbReference type="GeneID" id="66911774"/>
<dbReference type="KEGG" id="xac:XAC2685"/>
<dbReference type="eggNOG" id="COG0130">
    <property type="taxonomic scope" value="Bacteria"/>
</dbReference>
<dbReference type="HOGENOM" id="CLU_032087_0_3_6"/>
<dbReference type="Proteomes" id="UP000000576">
    <property type="component" value="Chromosome"/>
</dbReference>
<dbReference type="GO" id="GO:0003723">
    <property type="term" value="F:RNA binding"/>
    <property type="evidence" value="ECO:0007669"/>
    <property type="project" value="InterPro"/>
</dbReference>
<dbReference type="GO" id="GO:0160148">
    <property type="term" value="F:tRNA pseudouridine(55) synthase activity"/>
    <property type="evidence" value="ECO:0007669"/>
    <property type="project" value="UniProtKB-EC"/>
</dbReference>
<dbReference type="GO" id="GO:1990481">
    <property type="term" value="P:mRNA pseudouridine synthesis"/>
    <property type="evidence" value="ECO:0007669"/>
    <property type="project" value="TreeGrafter"/>
</dbReference>
<dbReference type="GO" id="GO:0031119">
    <property type="term" value="P:tRNA pseudouridine synthesis"/>
    <property type="evidence" value="ECO:0007669"/>
    <property type="project" value="UniProtKB-UniRule"/>
</dbReference>
<dbReference type="CDD" id="cd02573">
    <property type="entry name" value="PseudoU_synth_EcTruB"/>
    <property type="match status" value="1"/>
</dbReference>
<dbReference type="CDD" id="cd21152">
    <property type="entry name" value="PUA_TruB_bacterial"/>
    <property type="match status" value="1"/>
</dbReference>
<dbReference type="FunFam" id="3.30.2350.10:FF:000011">
    <property type="entry name" value="tRNA pseudouridine synthase B"/>
    <property type="match status" value="1"/>
</dbReference>
<dbReference type="Gene3D" id="3.30.2350.10">
    <property type="entry name" value="Pseudouridine synthase"/>
    <property type="match status" value="1"/>
</dbReference>
<dbReference type="Gene3D" id="2.30.130.10">
    <property type="entry name" value="PUA domain"/>
    <property type="match status" value="1"/>
</dbReference>
<dbReference type="HAMAP" id="MF_01080">
    <property type="entry name" value="TruB_bact"/>
    <property type="match status" value="1"/>
</dbReference>
<dbReference type="InterPro" id="IPR020103">
    <property type="entry name" value="PsdUridine_synth_cat_dom_sf"/>
</dbReference>
<dbReference type="InterPro" id="IPR002501">
    <property type="entry name" value="PsdUridine_synth_N"/>
</dbReference>
<dbReference type="InterPro" id="IPR015947">
    <property type="entry name" value="PUA-like_sf"/>
</dbReference>
<dbReference type="InterPro" id="IPR036974">
    <property type="entry name" value="PUA_sf"/>
</dbReference>
<dbReference type="InterPro" id="IPR014780">
    <property type="entry name" value="tRNA_psdUridine_synth_TruB"/>
</dbReference>
<dbReference type="InterPro" id="IPR015240">
    <property type="entry name" value="tRNA_sdUridine_synth_fam1_C"/>
</dbReference>
<dbReference type="InterPro" id="IPR032819">
    <property type="entry name" value="TruB_C"/>
</dbReference>
<dbReference type="NCBIfam" id="TIGR00431">
    <property type="entry name" value="TruB"/>
    <property type="match status" value="1"/>
</dbReference>
<dbReference type="PANTHER" id="PTHR13767:SF2">
    <property type="entry name" value="PSEUDOURIDYLATE SYNTHASE TRUB1"/>
    <property type="match status" value="1"/>
</dbReference>
<dbReference type="PANTHER" id="PTHR13767">
    <property type="entry name" value="TRNA-PSEUDOURIDINE SYNTHASE"/>
    <property type="match status" value="1"/>
</dbReference>
<dbReference type="Pfam" id="PF09157">
    <property type="entry name" value="TruB-C_2"/>
    <property type="match status" value="1"/>
</dbReference>
<dbReference type="Pfam" id="PF16198">
    <property type="entry name" value="TruB_C_2"/>
    <property type="match status" value="1"/>
</dbReference>
<dbReference type="Pfam" id="PF01509">
    <property type="entry name" value="TruB_N"/>
    <property type="match status" value="1"/>
</dbReference>
<dbReference type="SUPFAM" id="SSF55120">
    <property type="entry name" value="Pseudouridine synthase"/>
    <property type="match status" value="1"/>
</dbReference>
<dbReference type="SUPFAM" id="SSF88697">
    <property type="entry name" value="PUA domain-like"/>
    <property type="match status" value="1"/>
</dbReference>